<dbReference type="EC" id="3.4.21.53" evidence="1"/>
<dbReference type="EMBL" id="AF030688">
    <property type="protein sequence ID" value="AAB86425.1"/>
    <property type="molecule type" value="Genomic_DNA"/>
</dbReference>
<dbReference type="SMR" id="O31147"/>
<dbReference type="GO" id="GO:0005737">
    <property type="term" value="C:cytoplasm"/>
    <property type="evidence" value="ECO:0007669"/>
    <property type="project" value="UniProtKB-SubCell"/>
</dbReference>
<dbReference type="GO" id="GO:0005524">
    <property type="term" value="F:ATP binding"/>
    <property type="evidence" value="ECO:0007669"/>
    <property type="project" value="UniProtKB-UniRule"/>
</dbReference>
<dbReference type="GO" id="GO:0016887">
    <property type="term" value="F:ATP hydrolysis activity"/>
    <property type="evidence" value="ECO:0007669"/>
    <property type="project" value="UniProtKB-UniRule"/>
</dbReference>
<dbReference type="GO" id="GO:0004176">
    <property type="term" value="F:ATP-dependent peptidase activity"/>
    <property type="evidence" value="ECO:0007669"/>
    <property type="project" value="UniProtKB-UniRule"/>
</dbReference>
<dbReference type="GO" id="GO:0043565">
    <property type="term" value="F:sequence-specific DNA binding"/>
    <property type="evidence" value="ECO:0007669"/>
    <property type="project" value="UniProtKB-UniRule"/>
</dbReference>
<dbReference type="GO" id="GO:0004252">
    <property type="term" value="F:serine-type endopeptidase activity"/>
    <property type="evidence" value="ECO:0007669"/>
    <property type="project" value="UniProtKB-UniRule"/>
</dbReference>
<dbReference type="GO" id="GO:0034605">
    <property type="term" value="P:cellular response to heat"/>
    <property type="evidence" value="ECO:0007669"/>
    <property type="project" value="UniProtKB-UniRule"/>
</dbReference>
<dbReference type="GO" id="GO:0006515">
    <property type="term" value="P:protein quality control for misfolded or incompletely synthesized proteins"/>
    <property type="evidence" value="ECO:0007669"/>
    <property type="project" value="UniProtKB-UniRule"/>
</dbReference>
<dbReference type="CDD" id="cd19500">
    <property type="entry name" value="RecA-like_Lon"/>
    <property type="match status" value="1"/>
</dbReference>
<dbReference type="FunFam" id="3.40.50.300:FF:000021">
    <property type="entry name" value="Lon protease homolog"/>
    <property type="match status" value="1"/>
</dbReference>
<dbReference type="Gene3D" id="1.10.8.60">
    <property type="match status" value="1"/>
</dbReference>
<dbReference type="Gene3D" id="1.20.5.5270">
    <property type="match status" value="1"/>
</dbReference>
<dbReference type="Gene3D" id="1.20.58.1480">
    <property type="match status" value="1"/>
</dbReference>
<dbReference type="Gene3D" id="3.30.230.10">
    <property type="match status" value="1"/>
</dbReference>
<dbReference type="Gene3D" id="2.30.130.40">
    <property type="entry name" value="LON domain-like"/>
    <property type="match status" value="1"/>
</dbReference>
<dbReference type="Gene3D" id="3.40.50.300">
    <property type="entry name" value="P-loop containing nucleotide triphosphate hydrolases"/>
    <property type="match status" value="1"/>
</dbReference>
<dbReference type="HAMAP" id="MF_01973">
    <property type="entry name" value="lon_bact"/>
    <property type="match status" value="1"/>
</dbReference>
<dbReference type="InterPro" id="IPR003593">
    <property type="entry name" value="AAA+_ATPase"/>
</dbReference>
<dbReference type="InterPro" id="IPR003959">
    <property type="entry name" value="ATPase_AAA_core"/>
</dbReference>
<dbReference type="InterPro" id="IPR027543">
    <property type="entry name" value="Lon_bac"/>
</dbReference>
<dbReference type="InterPro" id="IPR004815">
    <property type="entry name" value="Lon_bac/euk-typ"/>
</dbReference>
<dbReference type="InterPro" id="IPR054594">
    <property type="entry name" value="Lon_lid"/>
</dbReference>
<dbReference type="InterPro" id="IPR008269">
    <property type="entry name" value="Lon_proteolytic"/>
</dbReference>
<dbReference type="InterPro" id="IPR027065">
    <property type="entry name" value="Lon_Prtase"/>
</dbReference>
<dbReference type="InterPro" id="IPR003111">
    <property type="entry name" value="Lon_prtase_N"/>
</dbReference>
<dbReference type="InterPro" id="IPR046336">
    <property type="entry name" value="Lon_prtase_N_sf"/>
</dbReference>
<dbReference type="InterPro" id="IPR027417">
    <property type="entry name" value="P-loop_NTPase"/>
</dbReference>
<dbReference type="InterPro" id="IPR008268">
    <property type="entry name" value="Peptidase_S16_AS"/>
</dbReference>
<dbReference type="InterPro" id="IPR015947">
    <property type="entry name" value="PUA-like_sf"/>
</dbReference>
<dbReference type="InterPro" id="IPR020568">
    <property type="entry name" value="Ribosomal_Su5_D2-typ_SF"/>
</dbReference>
<dbReference type="InterPro" id="IPR014721">
    <property type="entry name" value="Ribsml_uS5_D2-typ_fold_subgr"/>
</dbReference>
<dbReference type="NCBIfam" id="TIGR00763">
    <property type="entry name" value="lon"/>
    <property type="match status" value="1"/>
</dbReference>
<dbReference type="PANTHER" id="PTHR10046">
    <property type="entry name" value="ATP DEPENDENT LON PROTEASE FAMILY MEMBER"/>
    <property type="match status" value="1"/>
</dbReference>
<dbReference type="Pfam" id="PF00004">
    <property type="entry name" value="AAA"/>
    <property type="match status" value="1"/>
</dbReference>
<dbReference type="Pfam" id="PF05362">
    <property type="entry name" value="Lon_C"/>
    <property type="match status" value="1"/>
</dbReference>
<dbReference type="Pfam" id="PF22667">
    <property type="entry name" value="Lon_lid"/>
    <property type="match status" value="1"/>
</dbReference>
<dbReference type="Pfam" id="PF02190">
    <property type="entry name" value="LON_substr_bdg"/>
    <property type="match status" value="1"/>
</dbReference>
<dbReference type="PIRSF" id="PIRSF001174">
    <property type="entry name" value="Lon_proteas"/>
    <property type="match status" value="1"/>
</dbReference>
<dbReference type="PRINTS" id="PR00830">
    <property type="entry name" value="ENDOLAPTASE"/>
</dbReference>
<dbReference type="SMART" id="SM00382">
    <property type="entry name" value="AAA"/>
    <property type="match status" value="1"/>
</dbReference>
<dbReference type="SMART" id="SM00464">
    <property type="entry name" value="LON"/>
    <property type="match status" value="1"/>
</dbReference>
<dbReference type="SUPFAM" id="SSF52540">
    <property type="entry name" value="P-loop containing nucleoside triphosphate hydrolases"/>
    <property type="match status" value="1"/>
</dbReference>
<dbReference type="SUPFAM" id="SSF88697">
    <property type="entry name" value="PUA domain-like"/>
    <property type="match status" value="1"/>
</dbReference>
<dbReference type="SUPFAM" id="SSF54211">
    <property type="entry name" value="Ribosomal protein S5 domain 2-like"/>
    <property type="match status" value="1"/>
</dbReference>
<dbReference type="PROSITE" id="PS51787">
    <property type="entry name" value="LON_N"/>
    <property type="match status" value="1"/>
</dbReference>
<dbReference type="PROSITE" id="PS51786">
    <property type="entry name" value="LON_PROTEOLYTIC"/>
    <property type="match status" value="1"/>
</dbReference>
<dbReference type="PROSITE" id="PS01046">
    <property type="entry name" value="LON_SER"/>
    <property type="match status" value="1"/>
</dbReference>
<name>LON_MYCSM</name>
<comment type="function">
    <text evidence="1 5">ATP-dependent serine protease that mediates the selective degradation of mutant and abnormal proteins as well as certain short-lived regulatory proteins. Required for cellular homeostasis and for survival from DNA damage and developmental changes induced by stress. Degrades polypeptides processively to yield small peptide fragments that are 5 to 10 amino acids long. Binds to DNA in a double-stranded, site-specific manner.</text>
</comment>
<comment type="catalytic activity">
    <reaction evidence="1">
        <text>Hydrolysis of proteins in presence of ATP.</text>
        <dbReference type="EC" id="3.4.21.53"/>
    </reaction>
</comment>
<comment type="activity regulation">
    <text evidence="5">Stimulated by unfolded protein.</text>
</comment>
<comment type="subunit">
    <text evidence="1 4">Homohexamer. Organized in a ring with a central cavity (By similarity). Oligomerization is Mg(2+)-dependent.</text>
</comment>
<comment type="subcellular location">
    <subcellularLocation>
        <location>Cytoplasm</location>
    </subcellularLocation>
</comment>
<comment type="induction">
    <text evidence="1">By heat shock.</text>
</comment>
<comment type="similarity">
    <text evidence="1">Belongs to the peptidase S16 family.</text>
</comment>
<accession>O31147</accession>
<reference key="1">
    <citation type="journal article" date="1998" name="Biochemistry">
        <title>The lon protease from Mycobacterium smegmatis: molecular cloning, sequence analysis, functional expression, and enzymatic characterization.</title>
        <authorList>
            <person name="Roudiak S.G."/>
            <person name="Seth A."/>
            <person name="Knipfer N."/>
            <person name="Shrader T.E."/>
        </authorList>
    </citation>
    <scope>NUCLEOTIDE SEQUENCE [GENOMIC DNA]</scope>
    <scope>FUNCTION</scope>
    <scope>ACTIVITY REGULATION</scope>
    <scope>MUTAGENESIS OF SER-675</scope>
</reference>
<reference key="2">
    <citation type="journal article" date="2001" name="Biochemistry">
        <title>Mg2+-linked oligomerization modulates the catalytic activity of the Lon (La) protease from Mycobacterium smegmatis.</title>
        <authorList>
            <person name="Rudyak S.G."/>
            <person name="Brenowitz M."/>
            <person name="Shrader T.E."/>
        </authorList>
    </citation>
    <scope>SUBUNIT</scope>
</reference>
<keyword id="KW-0067">ATP-binding</keyword>
<keyword id="KW-0963">Cytoplasm</keyword>
<keyword id="KW-0378">Hydrolase</keyword>
<keyword id="KW-0547">Nucleotide-binding</keyword>
<keyword id="KW-0645">Protease</keyword>
<keyword id="KW-0720">Serine protease</keyword>
<keyword id="KW-0346">Stress response</keyword>
<protein>
    <recommendedName>
        <fullName evidence="1">Lon protease</fullName>
        <ecNumber evidence="1">3.4.21.53</ecNumber>
    </recommendedName>
    <alternativeName>
        <fullName evidence="1">ATP-dependent protease La</fullName>
    </alternativeName>
</protein>
<gene>
    <name evidence="1" type="primary">lon</name>
</gene>
<feature type="chain" id="PRO_0000076141" description="Lon protease">
    <location>
        <begin position="1"/>
        <end position="779"/>
    </location>
</feature>
<feature type="domain" description="Lon N-terminal" evidence="3">
    <location>
        <begin position="7"/>
        <end position="190"/>
    </location>
</feature>
<feature type="domain" description="Lon proteolytic" evidence="2">
    <location>
        <begin position="589"/>
        <end position="769"/>
    </location>
</feature>
<feature type="active site">
    <location>
        <position position="675"/>
    </location>
</feature>
<feature type="active site" evidence="1">
    <location>
        <position position="718"/>
    </location>
</feature>
<feature type="binding site" evidence="1">
    <location>
        <begin position="352"/>
        <end position="359"/>
    </location>
    <ligand>
        <name>ATP</name>
        <dbReference type="ChEBI" id="CHEBI:30616"/>
    </ligand>
</feature>
<feature type="mutagenesis site" description="Loss of activity." evidence="5">
    <original>S</original>
    <variation>A</variation>
    <variation>T</variation>
    <location>
        <position position="675"/>
    </location>
</feature>
<feature type="mutagenesis site" description="Retains some activity." evidence="5">
    <original>S</original>
    <variation>C</variation>
    <location>
        <position position="675"/>
    </location>
</feature>
<sequence length="779" mass="83676">MAEAKTVPVLFLNDSIVLPGMVVPIELDDAARAAVDAARASESGELLIAPRLEDRYPAYGVLASIVQIGRLPNGDAAAVVRGERRAHIGSGTSGPGAALWVQVEEVTDPEPTDETKKLAGEYKKLLLAMLQRRDAWQIVDMVNKITDPSALADTAGYASYLTGTQKRELLETTDVDRRLSLLIGWTGDHLAETEVNDKIAEDVRTGMEKQQKEFLLRQQLAAIRKELGELDDNGDGSSDDYRARIEQADLPEKVREAALREVGKLERASDQSPEGGWIRTWLDTVLDLPWNVRTEDSTDLARAREILDTDHHGLSDVKDRIVEYLAVRGAAPQRGMAVVGGRGSGAVMVLAGPPGVGKTSLGESVARALDRKFVRVALGGVRDEAEIRGHRRTYVGALPGRIVRAIGEAGSMNPVVLLDEIDKVGSDYRGDPAAALLEVLDPAQNHTFRDHYLDLDLDLSDVVFLVTANVIENIPSALLDRMELVEIDGYTADDKLAIAQGFLLPRQRERGGLTSDEVTVTEAALRKIAADYTREPGVRQFERLLAKAMRKAATKLADHPQAAPITIDEPDLVEYLGRPRFLPESAERTAVPGVATGLAVTGLGGDVLYIEANSTEGEPGLQLTGQLGDVMKESAQIAMSYVRAHAKQLGVDPEALNRRIHIHVPAGAVPKDGPSAGVTMVTALVSMATGRKVRGDVGMTGEVTLNGRVLPIGGVKQKLLAAQRAGLSTVFIPQRNQPDLDDVPADVLDALDVRPMTDVADIIAAALEPAHEASTAAAA</sequence>
<proteinExistence type="evidence at protein level"/>
<organism>
    <name type="scientific">Mycolicibacterium smegmatis</name>
    <name type="common">Mycobacterium smegmatis</name>
    <dbReference type="NCBI Taxonomy" id="1772"/>
    <lineage>
        <taxon>Bacteria</taxon>
        <taxon>Bacillati</taxon>
        <taxon>Actinomycetota</taxon>
        <taxon>Actinomycetes</taxon>
        <taxon>Mycobacteriales</taxon>
        <taxon>Mycobacteriaceae</taxon>
        <taxon>Mycolicibacterium</taxon>
    </lineage>
</organism>
<evidence type="ECO:0000255" key="1">
    <source>
        <dbReference type="HAMAP-Rule" id="MF_01973"/>
    </source>
</evidence>
<evidence type="ECO:0000255" key="2">
    <source>
        <dbReference type="PROSITE-ProRule" id="PRU01122"/>
    </source>
</evidence>
<evidence type="ECO:0000255" key="3">
    <source>
        <dbReference type="PROSITE-ProRule" id="PRU01123"/>
    </source>
</evidence>
<evidence type="ECO:0000269" key="4">
    <source>
    </source>
</evidence>
<evidence type="ECO:0000269" key="5">
    <source>
    </source>
</evidence>